<sequence>MKYLNQQEAISVDEELFNEYKFSVDQLMELAGLSCAHAIADAYSPDRSNKVLICCGPGNNGGDGLVAARHLSLMSFVPYVYYPKRTDKELFKNLQHQAESMGITVSVDCPAGEWVEAEFGLIVDALFGFSFKPPVRESFRPIMEVLQKTKLPIVSVDIPSGWDVELGPQTDCDIMPDCLISLTAPKLCAKHLVNAKHYLGGRFVPGKLEEKYAMNLPAYKGRDLFVRLS</sequence>
<feature type="chain" id="PRO_0000416317" description="NAD(P)H-hydrate epimerase">
    <location>
        <begin position="1"/>
        <end position="229"/>
    </location>
</feature>
<feature type="domain" description="YjeF N-terminal" evidence="1">
    <location>
        <begin position="9"/>
        <end position="216"/>
    </location>
</feature>
<feature type="binding site" evidence="1">
    <location>
        <begin position="59"/>
        <end position="63"/>
    </location>
    <ligand>
        <name>(6S)-NADPHX</name>
        <dbReference type="ChEBI" id="CHEBI:64076"/>
    </ligand>
</feature>
<feature type="binding site" evidence="1">
    <location>
        <position position="60"/>
    </location>
    <ligand>
        <name>K(+)</name>
        <dbReference type="ChEBI" id="CHEBI:29103"/>
    </ligand>
</feature>
<feature type="binding site" evidence="1">
    <location>
        <position position="124"/>
    </location>
    <ligand>
        <name>K(+)</name>
        <dbReference type="ChEBI" id="CHEBI:29103"/>
    </ligand>
</feature>
<feature type="binding site" evidence="1">
    <location>
        <begin position="128"/>
        <end position="134"/>
    </location>
    <ligand>
        <name>(6S)-NADPHX</name>
        <dbReference type="ChEBI" id="CHEBI:64076"/>
    </ligand>
</feature>
<feature type="binding site" evidence="1">
    <location>
        <position position="157"/>
    </location>
    <ligand>
        <name>(6S)-NADPHX</name>
        <dbReference type="ChEBI" id="CHEBI:64076"/>
    </ligand>
</feature>
<feature type="binding site" evidence="1">
    <location>
        <position position="160"/>
    </location>
    <ligand>
        <name>K(+)</name>
        <dbReference type="ChEBI" id="CHEBI:29103"/>
    </ligand>
</feature>
<name>NNRE_ANOGA</name>
<evidence type="ECO:0000255" key="1">
    <source>
        <dbReference type="HAMAP-Rule" id="MF_03159"/>
    </source>
</evidence>
<protein>
    <recommendedName>
        <fullName evidence="1">NAD(P)H-hydrate epimerase</fullName>
        <ecNumber>5.1.99.6</ecNumber>
    </recommendedName>
    <alternativeName>
        <fullName evidence="1">NAD(P)HX epimerase</fullName>
    </alternativeName>
</protein>
<reference key="1">
    <citation type="journal article" date="2002" name="Science">
        <title>The genome sequence of the malaria mosquito Anopheles gambiae.</title>
        <authorList>
            <person name="Holt R.A."/>
            <person name="Subramanian G.M."/>
            <person name="Halpern A."/>
            <person name="Sutton G.G."/>
            <person name="Charlab R."/>
            <person name="Nusskern D.R."/>
            <person name="Wincker P."/>
            <person name="Clark A.G."/>
            <person name="Ribeiro J.M.C."/>
            <person name="Wides R."/>
            <person name="Salzberg S.L."/>
            <person name="Loftus B.J."/>
            <person name="Yandell M.D."/>
            <person name="Majoros W.H."/>
            <person name="Rusch D.B."/>
            <person name="Lai Z."/>
            <person name="Kraft C.L."/>
            <person name="Abril J.F."/>
            <person name="Anthouard V."/>
            <person name="Arensburger P."/>
            <person name="Atkinson P.W."/>
            <person name="Baden H."/>
            <person name="de Berardinis V."/>
            <person name="Baldwin D."/>
            <person name="Benes V."/>
            <person name="Biedler J."/>
            <person name="Blass C."/>
            <person name="Bolanos R."/>
            <person name="Boscus D."/>
            <person name="Barnstead M."/>
            <person name="Cai S."/>
            <person name="Center A."/>
            <person name="Chaturverdi K."/>
            <person name="Christophides G.K."/>
            <person name="Chrystal M.A.M."/>
            <person name="Clamp M."/>
            <person name="Cravchik A."/>
            <person name="Curwen V."/>
            <person name="Dana A."/>
            <person name="Delcher A."/>
            <person name="Dew I."/>
            <person name="Evans C.A."/>
            <person name="Flanigan M."/>
            <person name="Grundschober-Freimoser A."/>
            <person name="Friedli L."/>
            <person name="Gu Z."/>
            <person name="Guan P."/>
            <person name="Guigo R."/>
            <person name="Hillenmeyer M.E."/>
            <person name="Hladun S.L."/>
            <person name="Hogan J.R."/>
            <person name="Hong Y.S."/>
            <person name="Hoover J."/>
            <person name="Jaillon O."/>
            <person name="Ke Z."/>
            <person name="Kodira C.D."/>
            <person name="Kokoza E."/>
            <person name="Koutsos A."/>
            <person name="Letunic I."/>
            <person name="Levitsky A.A."/>
            <person name="Liang Y."/>
            <person name="Lin J.-J."/>
            <person name="Lobo N.F."/>
            <person name="Lopez J.R."/>
            <person name="Malek J.A."/>
            <person name="McIntosh T.C."/>
            <person name="Meister S."/>
            <person name="Miller J.R."/>
            <person name="Mobarry C."/>
            <person name="Mongin E."/>
            <person name="Murphy S.D."/>
            <person name="O'Brochta D.A."/>
            <person name="Pfannkoch C."/>
            <person name="Qi R."/>
            <person name="Regier M.A."/>
            <person name="Remington K."/>
            <person name="Shao H."/>
            <person name="Sharakhova M.V."/>
            <person name="Sitter C.D."/>
            <person name="Shetty J."/>
            <person name="Smith T.J."/>
            <person name="Strong R."/>
            <person name="Sun J."/>
            <person name="Thomasova D."/>
            <person name="Ton L.Q."/>
            <person name="Topalis P."/>
            <person name="Tu Z.J."/>
            <person name="Unger M.F."/>
            <person name="Walenz B."/>
            <person name="Wang A.H."/>
            <person name="Wang J."/>
            <person name="Wang M."/>
            <person name="Wang X."/>
            <person name="Woodford K.J."/>
            <person name="Wortman J.R."/>
            <person name="Wu M."/>
            <person name="Yao A."/>
            <person name="Zdobnov E.M."/>
            <person name="Zhang H."/>
            <person name="Zhao Q."/>
            <person name="Zhao S."/>
            <person name="Zhu S.C."/>
            <person name="Zhimulev I."/>
            <person name="Coluzzi M."/>
            <person name="della Torre A."/>
            <person name="Roth C.W."/>
            <person name="Louis C."/>
            <person name="Kalush F."/>
            <person name="Mural R.J."/>
            <person name="Myers E.W."/>
            <person name="Adams M.D."/>
            <person name="Smith H.O."/>
            <person name="Broder S."/>
            <person name="Gardner M.J."/>
            <person name="Fraser C.M."/>
            <person name="Birney E."/>
            <person name="Bork P."/>
            <person name="Brey P.T."/>
            <person name="Venter J.C."/>
            <person name="Weissenbach J."/>
            <person name="Kafatos F.C."/>
            <person name="Collins F.H."/>
            <person name="Hoffman S.L."/>
        </authorList>
    </citation>
    <scope>NUCLEOTIDE SEQUENCE [LARGE SCALE GENOMIC DNA]</scope>
    <source>
        <strain>PEST</strain>
    </source>
</reference>
<gene>
    <name type="ORF">AGAP003324</name>
</gene>
<keyword id="KW-0413">Isomerase</keyword>
<keyword id="KW-0479">Metal-binding</keyword>
<keyword id="KW-0520">NAD</keyword>
<keyword id="KW-0521">NADP</keyword>
<keyword id="KW-0547">Nucleotide-binding</keyword>
<keyword id="KW-0630">Potassium</keyword>
<keyword id="KW-1185">Reference proteome</keyword>
<organism>
    <name type="scientific">Anopheles gambiae</name>
    <name type="common">African malaria mosquito</name>
    <dbReference type="NCBI Taxonomy" id="7165"/>
    <lineage>
        <taxon>Eukaryota</taxon>
        <taxon>Metazoa</taxon>
        <taxon>Ecdysozoa</taxon>
        <taxon>Arthropoda</taxon>
        <taxon>Hexapoda</taxon>
        <taxon>Insecta</taxon>
        <taxon>Pterygota</taxon>
        <taxon>Neoptera</taxon>
        <taxon>Endopterygota</taxon>
        <taxon>Diptera</taxon>
        <taxon>Nematocera</taxon>
        <taxon>Culicoidea</taxon>
        <taxon>Culicidae</taxon>
        <taxon>Anophelinae</taxon>
        <taxon>Anopheles</taxon>
    </lineage>
</organism>
<dbReference type="EC" id="5.1.99.6"/>
<dbReference type="EMBL" id="AAAB01008982">
    <property type="protein sequence ID" value="EAA14644.4"/>
    <property type="molecule type" value="Genomic_DNA"/>
</dbReference>
<dbReference type="RefSeq" id="XP_319557.4">
    <property type="nucleotide sequence ID" value="XM_319557.4"/>
</dbReference>
<dbReference type="SMR" id="Q7Q0G5"/>
<dbReference type="FunCoup" id="Q7Q0G5">
    <property type="interactions" value="1457"/>
</dbReference>
<dbReference type="STRING" id="7165.Q7Q0G5"/>
<dbReference type="PaxDb" id="7165-AGAP003324-PA"/>
<dbReference type="VEuPathDB" id="VectorBase:AGAMI1_001839"/>
<dbReference type="VEuPathDB" id="VectorBase:AGAP003324"/>
<dbReference type="eggNOG" id="KOG2585">
    <property type="taxonomic scope" value="Eukaryota"/>
</dbReference>
<dbReference type="HOGENOM" id="CLU_024853_3_0_1"/>
<dbReference type="InParanoid" id="Q7Q0G5"/>
<dbReference type="OMA" id="RHLFHYG"/>
<dbReference type="PhylomeDB" id="Q7Q0G5"/>
<dbReference type="Proteomes" id="UP000007062">
    <property type="component" value="Chromosome 2R"/>
</dbReference>
<dbReference type="GO" id="GO:0005739">
    <property type="term" value="C:mitochondrion"/>
    <property type="evidence" value="ECO:0000318"/>
    <property type="project" value="GO_Central"/>
</dbReference>
<dbReference type="GO" id="GO:0046872">
    <property type="term" value="F:metal ion binding"/>
    <property type="evidence" value="ECO:0007669"/>
    <property type="project" value="UniProtKB-KW"/>
</dbReference>
<dbReference type="GO" id="GO:0052856">
    <property type="term" value="F:NAD(P)HX epimerase activity"/>
    <property type="evidence" value="ECO:0000318"/>
    <property type="project" value="GO_Central"/>
</dbReference>
<dbReference type="GO" id="GO:0000166">
    <property type="term" value="F:nucleotide binding"/>
    <property type="evidence" value="ECO:0007669"/>
    <property type="project" value="UniProtKB-KW"/>
</dbReference>
<dbReference type="FunFam" id="3.40.50.10260:FF:000004">
    <property type="entry name" value="yjeF N-terminal domain-containing protein 3"/>
    <property type="match status" value="1"/>
</dbReference>
<dbReference type="Gene3D" id="3.40.50.10260">
    <property type="entry name" value="YjeF N-terminal domain"/>
    <property type="match status" value="1"/>
</dbReference>
<dbReference type="HAMAP" id="MF_01966">
    <property type="entry name" value="NADHX_epimerase"/>
    <property type="match status" value="1"/>
</dbReference>
<dbReference type="InterPro" id="IPR004443">
    <property type="entry name" value="YjeF_N_dom"/>
</dbReference>
<dbReference type="InterPro" id="IPR036652">
    <property type="entry name" value="YjeF_N_dom_sf"/>
</dbReference>
<dbReference type="InterPro" id="IPR032976">
    <property type="entry name" value="YJEFN_prot_NAXE-like"/>
</dbReference>
<dbReference type="NCBIfam" id="TIGR00197">
    <property type="entry name" value="yjeF_nterm"/>
    <property type="match status" value="1"/>
</dbReference>
<dbReference type="PANTHER" id="PTHR13232">
    <property type="entry name" value="NAD(P)H-HYDRATE EPIMERASE"/>
    <property type="match status" value="1"/>
</dbReference>
<dbReference type="PANTHER" id="PTHR13232:SF10">
    <property type="entry name" value="NAD(P)H-HYDRATE EPIMERASE"/>
    <property type="match status" value="1"/>
</dbReference>
<dbReference type="Pfam" id="PF03853">
    <property type="entry name" value="YjeF_N"/>
    <property type="match status" value="1"/>
</dbReference>
<dbReference type="SUPFAM" id="SSF64153">
    <property type="entry name" value="YjeF N-terminal domain-like"/>
    <property type="match status" value="1"/>
</dbReference>
<dbReference type="PROSITE" id="PS51385">
    <property type="entry name" value="YJEF_N"/>
    <property type="match status" value="1"/>
</dbReference>
<accession>Q7Q0G5</accession>
<proteinExistence type="inferred from homology"/>
<comment type="function">
    <text evidence="1">Catalyzes the epimerization of the S- and R-forms of NAD(P)HX, a damaged form of NAD(P)H that is a result of enzymatic or heat-dependent hydration. This is a prerequisite for the S-specific NAD(P)H-hydrate dehydratase to allow the repair of both epimers of NAD(P)HX.</text>
</comment>
<comment type="catalytic activity">
    <reaction>
        <text>(6R)-NADHX = (6S)-NADHX</text>
        <dbReference type="Rhea" id="RHEA:32215"/>
        <dbReference type="ChEBI" id="CHEBI:64074"/>
        <dbReference type="ChEBI" id="CHEBI:64075"/>
        <dbReference type="EC" id="5.1.99.6"/>
    </reaction>
</comment>
<comment type="catalytic activity">
    <reaction>
        <text>(6R)-NADPHX = (6S)-NADPHX</text>
        <dbReference type="Rhea" id="RHEA:32227"/>
        <dbReference type="ChEBI" id="CHEBI:64076"/>
        <dbReference type="ChEBI" id="CHEBI:64077"/>
        <dbReference type="EC" id="5.1.99.6"/>
    </reaction>
</comment>
<comment type="cofactor">
    <cofactor evidence="1">
        <name>K(+)</name>
        <dbReference type="ChEBI" id="CHEBI:29103"/>
    </cofactor>
    <text evidence="1">Binds 1 potassium ion per subunit.</text>
</comment>
<comment type="similarity">
    <text evidence="1">Belongs to the NnrE/AIBP family.</text>
</comment>